<accession>A1A0A2</accession>
<sequence length="931" mass="99003">MPKARVYELAKELGVDSKTVLSKLEAMGEFVKSASSTVEPPVARKLRNAFASSGQGNASDSKKPGHTAKKPAEPASHSMPKPAAPSAPKPAAPAAPKPRHAASKSDAPKPGHRAPRPGESRQHGNRPNGNAPRPQGGDRRQSGRPTAVPGARPQHGNAPQGGNNANGAKPHTPGPRPGNNPFSRKQGMHTPTPGDIPRPHPMNRPSVNNGEGRRGGRPGQGGGQRGGFRGRPGQGGAKPGQWGQHRPGQGGGQRPAGGGNRFGGNGGGFQGGNSAPSNGPARGGRGRGGAAGAFGRQGGKSSKARKNRLAKRQEFQEMKAPVIGGVRIPTGNGQEVRLRQGASLADLAEKINVNPAALVTVLFHLGEMATATQSLDEATFQILGEEIGWNIKIVSAEEEDKELLQQFDINLDEEELQEDGDLKPRPPVVTVMGHVDHGKTRLLDTIRRTNVIEGEAGGITQRIGAYQVTVNLEGEPRKITFLDTPGHEAFTAMRARGAELTDVAILVVAADDGVMPQTVEAINHAQAAHVPIVVAVNKIDKPGANPDKVRGQLTEYGLVPEEYGGNTMFVDISAKQGTNVDKLLEAVLLTADAELDLRANPDMDARGATVEARLDKGRGAVATVLVQSGTLHIGDAIVAGTSYGRVRAMLDENGNHMQEAGPSTPVQVLGLTSVPTAGDLFLVASDDRTARQIAEKRQATERAAQLAKRRKVVSLESLKEQFAKSEVDMLNIVIKGDSSGSVEALEDSLMKIEVSDEVGIQVIHRGVGAITQNDVNLATVDKAVIIGFNVRPNRQVADLAEREGVEIKYYSIIYKAIEDIEASLKGMLKPEYEEVVTSHSEIREIFRSSKFGNIAGVMVQDGEVKRGTKCRILRNGIATVNDLEISSLRRFKDDVTSVKEGYEAGINLGTFNDIEIGDIIETFEMQEIERK</sequence>
<evidence type="ECO:0000250" key="1"/>
<evidence type="ECO:0000255" key="2">
    <source>
        <dbReference type="HAMAP-Rule" id="MF_00100"/>
    </source>
</evidence>
<evidence type="ECO:0000256" key="3">
    <source>
        <dbReference type="SAM" id="MobiDB-lite"/>
    </source>
</evidence>
<proteinExistence type="inferred from homology"/>
<organism>
    <name type="scientific">Bifidobacterium adolescentis (strain ATCC 15703 / DSM 20083 / NCTC 11814 / E194a)</name>
    <dbReference type="NCBI Taxonomy" id="367928"/>
    <lineage>
        <taxon>Bacteria</taxon>
        <taxon>Bacillati</taxon>
        <taxon>Actinomycetota</taxon>
        <taxon>Actinomycetes</taxon>
        <taxon>Bifidobacteriales</taxon>
        <taxon>Bifidobacteriaceae</taxon>
        <taxon>Bifidobacterium</taxon>
    </lineage>
</organism>
<feature type="chain" id="PRO_1000008203" description="Translation initiation factor IF-2">
    <location>
        <begin position="1"/>
        <end position="931"/>
    </location>
</feature>
<feature type="domain" description="tr-type G">
    <location>
        <begin position="424"/>
        <end position="596"/>
    </location>
</feature>
<feature type="region of interest" description="Disordered" evidence="3">
    <location>
        <begin position="32"/>
        <end position="310"/>
    </location>
</feature>
<feature type="region of interest" description="G1" evidence="1">
    <location>
        <begin position="433"/>
        <end position="440"/>
    </location>
</feature>
<feature type="region of interest" description="G2" evidence="1">
    <location>
        <begin position="458"/>
        <end position="462"/>
    </location>
</feature>
<feature type="region of interest" description="G3" evidence="1">
    <location>
        <begin position="483"/>
        <end position="486"/>
    </location>
</feature>
<feature type="region of interest" description="G4" evidence="1">
    <location>
        <begin position="537"/>
        <end position="540"/>
    </location>
</feature>
<feature type="region of interest" description="G5" evidence="1">
    <location>
        <begin position="573"/>
        <end position="575"/>
    </location>
</feature>
<feature type="compositionally biased region" description="Polar residues" evidence="3">
    <location>
        <begin position="50"/>
        <end position="59"/>
    </location>
</feature>
<feature type="compositionally biased region" description="Pro residues" evidence="3">
    <location>
        <begin position="82"/>
        <end position="96"/>
    </location>
</feature>
<feature type="compositionally biased region" description="Low complexity" evidence="3">
    <location>
        <begin position="156"/>
        <end position="168"/>
    </location>
</feature>
<feature type="compositionally biased region" description="Gly residues" evidence="3">
    <location>
        <begin position="217"/>
        <end position="238"/>
    </location>
</feature>
<feature type="compositionally biased region" description="Gly residues" evidence="3">
    <location>
        <begin position="248"/>
        <end position="271"/>
    </location>
</feature>
<feature type="compositionally biased region" description="Gly residues" evidence="3">
    <location>
        <begin position="281"/>
        <end position="298"/>
    </location>
</feature>
<feature type="binding site" evidence="2">
    <location>
        <begin position="433"/>
        <end position="440"/>
    </location>
    <ligand>
        <name>GTP</name>
        <dbReference type="ChEBI" id="CHEBI:37565"/>
    </ligand>
</feature>
<feature type="binding site" evidence="2">
    <location>
        <begin position="483"/>
        <end position="487"/>
    </location>
    <ligand>
        <name>GTP</name>
        <dbReference type="ChEBI" id="CHEBI:37565"/>
    </ligand>
</feature>
<feature type="binding site" evidence="2">
    <location>
        <begin position="537"/>
        <end position="540"/>
    </location>
    <ligand>
        <name>GTP</name>
        <dbReference type="ChEBI" id="CHEBI:37565"/>
    </ligand>
</feature>
<protein>
    <recommendedName>
        <fullName evidence="2">Translation initiation factor IF-2</fullName>
    </recommendedName>
</protein>
<name>IF2_BIFAA</name>
<dbReference type="EMBL" id="AP009256">
    <property type="protein sequence ID" value="BAF39135.1"/>
    <property type="molecule type" value="Genomic_DNA"/>
</dbReference>
<dbReference type="RefSeq" id="WP_011742835.1">
    <property type="nucleotide sequence ID" value="NC_008618.1"/>
</dbReference>
<dbReference type="SMR" id="A1A0A2"/>
<dbReference type="STRING" id="367928.BAD_0354"/>
<dbReference type="PaxDb" id="1680-BADO_0361"/>
<dbReference type="GeneID" id="4556219"/>
<dbReference type="KEGG" id="bad:BAD_0354"/>
<dbReference type="HOGENOM" id="CLU_006301_9_1_11"/>
<dbReference type="Proteomes" id="UP000008702">
    <property type="component" value="Chromosome"/>
</dbReference>
<dbReference type="GO" id="GO:0005829">
    <property type="term" value="C:cytosol"/>
    <property type="evidence" value="ECO:0007669"/>
    <property type="project" value="TreeGrafter"/>
</dbReference>
<dbReference type="GO" id="GO:0005525">
    <property type="term" value="F:GTP binding"/>
    <property type="evidence" value="ECO:0007669"/>
    <property type="project" value="UniProtKB-KW"/>
</dbReference>
<dbReference type="GO" id="GO:0003924">
    <property type="term" value="F:GTPase activity"/>
    <property type="evidence" value="ECO:0007669"/>
    <property type="project" value="UniProtKB-UniRule"/>
</dbReference>
<dbReference type="GO" id="GO:0003743">
    <property type="term" value="F:translation initiation factor activity"/>
    <property type="evidence" value="ECO:0007669"/>
    <property type="project" value="UniProtKB-UniRule"/>
</dbReference>
<dbReference type="CDD" id="cd01887">
    <property type="entry name" value="IF2_eIF5B"/>
    <property type="match status" value="1"/>
</dbReference>
<dbReference type="CDD" id="cd03702">
    <property type="entry name" value="IF2_mtIF2_II"/>
    <property type="match status" value="1"/>
</dbReference>
<dbReference type="CDD" id="cd03692">
    <property type="entry name" value="mtIF2_IVc"/>
    <property type="match status" value="1"/>
</dbReference>
<dbReference type="FunFam" id="2.40.30.10:FF:000007">
    <property type="entry name" value="Translation initiation factor IF-2"/>
    <property type="match status" value="1"/>
</dbReference>
<dbReference type="FunFam" id="2.40.30.10:FF:000008">
    <property type="entry name" value="Translation initiation factor IF-2"/>
    <property type="match status" value="1"/>
</dbReference>
<dbReference type="FunFam" id="3.40.50.10050:FF:000001">
    <property type="entry name" value="Translation initiation factor IF-2"/>
    <property type="match status" value="1"/>
</dbReference>
<dbReference type="FunFam" id="3.40.50.300:FF:000019">
    <property type="entry name" value="Translation initiation factor IF-2"/>
    <property type="match status" value="1"/>
</dbReference>
<dbReference type="Gene3D" id="1.10.10.2480">
    <property type="match status" value="1"/>
</dbReference>
<dbReference type="Gene3D" id="3.40.50.300">
    <property type="entry name" value="P-loop containing nucleotide triphosphate hydrolases"/>
    <property type="match status" value="1"/>
</dbReference>
<dbReference type="Gene3D" id="2.40.30.10">
    <property type="entry name" value="Translation factors"/>
    <property type="match status" value="2"/>
</dbReference>
<dbReference type="Gene3D" id="3.40.50.10050">
    <property type="entry name" value="Translation initiation factor IF- 2, domain 3"/>
    <property type="match status" value="1"/>
</dbReference>
<dbReference type="HAMAP" id="MF_00100_B">
    <property type="entry name" value="IF_2_B"/>
    <property type="match status" value="1"/>
</dbReference>
<dbReference type="InterPro" id="IPR053905">
    <property type="entry name" value="EF-G-like_DII"/>
</dbReference>
<dbReference type="InterPro" id="IPR004161">
    <property type="entry name" value="EFTu-like_2"/>
</dbReference>
<dbReference type="InterPro" id="IPR044145">
    <property type="entry name" value="IF2_II"/>
</dbReference>
<dbReference type="InterPro" id="IPR006847">
    <property type="entry name" value="IF2_N"/>
</dbReference>
<dbReference type="InterPro" id="IPR027417">
    <property type="entry name" value="P-loop_NTPase"/>
</dbReference>
<dbReference type="InterPro" id="IPR005225">
    <property type="entry name" value="Small_GTP-bd"/>
</dbReference>
<dbReference type="InterPro" id="IPR000795">
    <property type="entry name" value="T_Tr_GTP-bd_dom"/>
</dbReference>
<dbReference type="InterPro" id="IPR000178">
    <property type="entry name" value="TF_IF2_bacterial-like"/>
</dbReference>
<dbReference type="InterPro" id="IPR015760">
    <property type="entry name" value="TIF_IF2"/>
</dbReference>
<dbReference type="InterPro" id="IPR023115">
    <property type="entry name" value="TIF_IF2_dom3"/>
</dbReference>
<dbReference type="InterPro" id="IPR036925">
    <property type="entry name" value="TIF_IF2_dom3_sf"/>
</dbReference>
<dbReference type="InterPro" id="IPR009000">
    <property type="entry name" value="Transl_B-barrel_sf"/>
</dbReference>
<dbReference type="NCBIfam" id="TIGR00487">
    <property type="entry name" value="IF-2"/>
    <property type="match status" value="1"/>
</dbReference>
<dbReference type="NCBIfam" id="TIGR00231">
    <property type="entry name" value="small_GTP"/>
    <property type="match status" value="1"/>
</dbReference>
<dbReference type="PANTHER" id="PTHR43381:SF5">
    <property type="entry name" value="TR-TYPE G DOMAIN-CONTAINING PROTEIN"/>
    <property type="match status" value="1"/>
</dbReference>
<dbReference type="PANTHER" id="PTHR43381">
    <property type="entry name" value="TRANSLATION INITIATION FACTOR IF-2-RELATED"/>
    <property type="match status" value="1"/>
</dbReference>
<dbReference type="Pfam" id="PF22042">
    <property type="entry name" value="EF-G_D2"/>
    <property type="match status" value="1"/>
</dbReference>
<dbReference type="Pfam" id="PF00009">
    <property type="entry name" value="GTP_EFTU"/>
    <property type="match status" value="1"/>
</dbReference>
<dbReference type="Pfam" id="PF03144">
    <property type="entry name" value="GTP_EFTU_D2"/>
    <property type="match status" value="1"/>
</dbReference>
<dbReference type="Pfam" id="PF11987">
    <property type="entry name" value="IF-2"/>
    <property type="match status" value="1"/>
</dbReference>
<dbReference type="Pfam" id="PF04760">
    <property type="entry name" value="IF2_N"/>
    <property type="match status" value="2"/>
</dbReference>
<dbReference type="PRINTS" id="PR00315">
    <property type="entry name" value="ELONGATNFCT"/>
</dbReference>
<dbReference type="SUPFAM" id="SSF52156">
    <property type="entry name" value="Initiation factor IF2/eIF5b, domain 3"/>
    <property type="match status" value="1"/>
</dbReference>
<dbReference type="SUPFAM" id="SSF52540">
    <property type="entry name" value="P-loop containing nucleoside triphosphate hydrolases"/>
    <property type="match status" value="1"/>
</dbReference>
<dbReference type="SUPFAM" id="SSF50447">
    <property type="entry name" value="Translation proteins"/>
    <property type="match status" value="2"/>
</dbReference>
<dbReference type="PROSITE" id="PS51722">
    <property type="entry name" value="G_TR_2"/>
    <property type="match status" value="1"/>
</dbReference>
<reference key="1">
    <citation type="submission" date="2006-12" db="EMBL/GenBank/DDBJ databases">
        <title>Bifidobacterium adolescentis complete genome sequence.</title>
        <authorList>
            <person name="Suzuki T."/>
            <person name="Tsuda Y."/>
            <person name="Kanou N."/>
            <person name="Inoue T."/>
            <person name="Kumazaki K."/>
            <person name="Nagano S."/>
            <person name="Hirai S."/>
            <person name="Tanaka K."/>
            <person name="Watanabe K."/>
        </authorList>
    </citation>
    <scope>NUCLEOTIDE SEQUENCE [LARGE SCALE GENOMIC DNA]</scope>
    <source>
        <strain>ATCC 15703 / DSM 20083 / NCTC 11814 / E194a</strain>
    </source>
</reference>
<gene>
    <name evidence="2" type="primary">infB</name>
    <name type="ordered locus">BAD_0354</name>
</gene>
<comment type="function">
    <text evidence="2">One of the essential components for the initiation of protein synthesis. Protects formylmethionyl-tRNA from spontaneous hydrolysis and promotes its binding to the 30S ribosomal subunits. Also involved in the hydrolysis of GTP during the formation of the 70S ribosomal complex.</text>
</comment>
<comment type="subcellular location">
    <subcellularLocation>
        <location evidence="2">Cytoplasm</location>
    </subcellularLocation>
</comment>
<comment type="similarity">
    <text evidence="2">Belongs to the TRAFAC class translation factor GTPase superfamily. Classic translation factor GTPase family. IF-2 subfamily.</text>
</comment>
<keyword id="KW-0963">Cytoplasm</keyword>
<keyword id="KW-0342">GTP-binding</keyword>
<keyword id="KW-0396">Initiation factor</keyword>
<keyword id="KW-0547">Nucleotide-binding</keyword>
<keyword id="KW-0648">Protein biosynthesis</keyword>
<keyword id="KW-1185">Reference proteome</keyword>